<feature type="chain" id="PRO_0000186476" description="PTS system N-acetylglucosamine-specific EIICBA component">
    <location>
        <begin position="1"/>
        <end position="651"/>
    </location>
</feature>
<feature type="transmembrane region" description="Helical" evidence="6">
    <location>
        <begin position="16"/>
        <end position="36"/>
    </location>
</feature>
<feature type="transmembrane region" description="Helical" evidence="6">
    <location>
        <begin position="40"/>
        <end position="60"/>
    </location>
</feature>
<feature type="transmembrane region" description="Helical" evidence="6">
    <location>
        <begin position="70"/>
        <end position="90"/>
    </location>
</feature>
<feature type="transmembrane region" description="Helical" evidence="6">
    <location>
        <begin position="92"/>
        <end position="112"/>
    </location>
</feature>
<feature type="transmembrane region" description="Helical" evidence="6">
    <location>
        <begin position="132"/>
        <end position="152"/>
    </location>
</feature>
<feature type="transmembrane region" description="Helical" evidence="6">
    <location>
        <begin position="165"/>
        <end position="185"/>
    </location>
</feature>
<feature type="transmembrane region" description="Helical" evidence="6">
    <location>
        <begin position="192"/>
        <end position="212"/>
    </location>
</feature>
<feature type="transmembrane region" description="Helical" evidence="6">
    <location>
        <begin position="232"/>
        <end position="252"/>
    </location>
</feature>
<feature type="transmembrane region" description="Helical" evidence="6">
    <location>
        <begin position="264"/>
        <end position="284"/>
    </location>
</feature>
<feature type="transmembrane region" description="Helical" evidence="6">
    <location>
        <begin position="285"/>
        <end position="305"/>
    </location>
</feature>
<feature type="transmembrane region" description="Helical" evidence="6">
    <location>
        <begin position="308"/>
        <end position="328"/>
    </location>
</feature>
<feature type="transmembrane region" description="Helical" evidence="6">
    <location>
        <begin position="339"/>
        <end position="359"/>
    </location>
</feature>
<feature type="domain" description="PTS EIIC type-1" evidence="6">
    <location>
        <begin position="1"/>
        <end position="371"/>
    </location>
</feature>
<feature type="domain" description="PTS EIIB type-1" evidence="5">
    <location>
        <begin position="390"/>
        <end position="472"/>
    </location>
</feature>
<feature type="domain" description="PTS EIIA type-1" evidence="4">
    <location>
        <begin position="519"/>
        <end position="623"/>
    </location>
</feature>
<feature type="active site" description="Phosphocysteine intermediate; for EIIB activity" evidence="5">
    <location>
        <position position="412"/>
    </location>
</feature>
<feature type="active site" description="Tele-phosphohistidine intermediate; for EIIA activity" evidence="4">
    <location>
        <position position="571"/>
    </location>
</feature>
<feature type="binding site" evidence="2">
    <location>
        <position position="556"/>
    </location>
    <ligand>
        <name>Zn(2+)</name>
        <dbReference type="ChEBI" id="CHEBI:29105"/>
    </ligand>
</feature>
<feature type="binding site" evidence="2">
    <location>
        <position position="571"/>
    </location>
    <ligand>
        <name>Zn(2+)</name>
        <dbReference type="ChEBI" id="CHEBI:29105"/>
    </ligand>
</feature>
<feature type="site" description="Important for phospho-donor activity" evidence="2">
    <location>
        <position position="556"/>
    </location>
</feature>
<feature type="modified residue" description="Phosphocysteine; by EIIA" evidence="3 7">
    <location>
        <position position="412"/>
    </location>
</feature>
<feature type="modified residue" description="Phosphohistidine; by HPr" evidence="3 7">
    <location>
        <position position="571"/>
    </location>
</feature>
<name>PTW3C_KLEPN</name>
<comment type="function">
    <text evidence="1">The phosphoenolpyruvate-dependent sugar phosphotransferase system (sugar PTS), a major carbohydrate active transport system, catalyzes the phosphorylation of incoming sugar substrates concomitantly with their translocation across the cell membrane. This system is involved in N-acetylglucosamine transport.</text>
</comment>
<comment type="catalytic activity">
    <reaction evidence="1">
        <text>N(pros)-phospho-L-histidyl-[protein] + N-acetyl-D-glucosamine(out) = N-acetyl-D-glucosamine 6-phosphate(in) + L-histidyl-[protein]</text>
        <dbReference type="Rhea" id="RHEA:49240"/>
        <dbReference type="Rhea" id="RHEA-COMP:9745"/>
        <dbReference type="Rhea" id="RHEA-COMP:9746"/>
        <dbReference type="ChEBI" id="CHEBI:29979"/>
        <dbReference type="ChEBI" id="CHEBI:57513"/>
        <dbReference type="ChEBI" id="CHEBI:64837"/>
        <dbReference type="ChEBI" id="CHEBI:506227"/>
        <dbReference type="EC" id="2.7.1.193"/>
    </reaction>
</comment>
<comment type="cofactor">
    <cofactor evidence="2">
        <name>Zn(2+)</name>
        <dbReference type="ChEBI" id="CHEBI:29105"/>
    </cofactor>
</comment>
<comment type="subcellular location">
    <subcellularLocation>
        <location evidence="6">Cell inner membrane</location>
        <topology evidence="6">Multi-pass membrane protein</topology>
    </subcellularLocation>
</comment>
<comment type="domain">
    <text evidence="6">The PTS EIIC type-1 domain forms the PTS system translocation channel and contains the specific substrate-binding site.</text>
</comment>
<comment type="domain">
    <text evidence="5">The PTS EIIB type-1 domain is phosphorylated by phospho-EIIA on a cysteinyl residue. Then, it transfers the phosphoryl group to the sugar substrate concomitantly with the sugar uptake processed by the PTS EIIC type-1 domain.</text>
</comment>
<comment type="domain">
    <text evidence="4">The PTS EIIA type-1 domain is phosphorylated by phospho-HPr on a histidyl residue. Then, it transfers the phosphoryl group to the PTS EIIB type-1 domain.</text>
</comment>
<gene>
    <name type="primary">nagE</name>
</gene>
<organism>
    <name type="scientific">Klebsiella pneumoniae</name>
    <dbReference type="NCBI Taxonomy" id="573"/>
    <lineage>
        <taxon>Bacteria</taxon>
        <taxon>Pseudomonadati</taxon>
        <taxon>Pseudomonadota</taxon>
        <taxon>Gammaproteobacteria</taxon>
        <taxon>Enterobacterales</taxon>
        <taxon>Enterobacteriaceae</taxon>
        <taxon>Klebsiella/Raoultella group</taxon>
        <taxon>Klebsiella</taxon>
        <taxon>Klebsiella pneumoniae complex</taxon>
    </lineage>
</organism>
<protein>
    <recommendedName>
        <fullName evidence="1">PTS system N-acetylglucosamine-specific EIICBA component</fullName>
    </recommendedName>
    <alternativeName>
        <fullName evidence="1">EIICBA-Nag</fullName>
        <shortName evidence="1">EII-Nag</shortName>
    </alternativeName>
    <domain>
        <recommendedName>
            <fullName evidence="1">N-acetylglucosamine permease IIC component</fullName>
        </recommendedName>
        <alternativeName>
            <fullName evidence="1">PTS system N-acetylglucosamine-specific EIIC component</fullName>
        </alternativeName>
    </domain>
    <domain>
        <recommendedName>
            <fullName evidence="1">N-acetylglucosamine-specific phosphotransferase enzyme IIB component</fullName>
            <ecNumber evidence="1">2.7.1.193</ecNumber>
        </recommendedName>
        <alternativeName>
            <fullName evidence="1">PTS system N-acetylglucosamine-specific EIIB component</fullName>
        </alternativeName>
    </domain>
    <domain>
        <recommendedName>
            <fullName evidence="1">N-acetylglucosamine-specific phosphotransferase enzyme IIA component</fullName>
        </recommendedName>
        <alternativeName>
            <fullName evidence="1">PTS system N-acetylglucosamine-specific EIIA component</fullName>
        </alternativeName>
    </domain>
</protein>
<accession>P45604</accession>
<dbReference type="EC" id="2.7.1.193" evidence="1"/>
<dbReference type="EMBL" id="X63289">
    <property type="protein sequence ID" value="CAA44923.1"/>
    <property type="molecule type" value="Genomic_DNA"/>
</dbReference>
<dbReference type="PIR" id="S18607">
    <property type="entry name" value="S18607"/>
</dbReference>
<dbReference type="SMR" id="P45604"/>
<dbReference type="BRENDA" id="2.7.1.193">
    <property type="organism ID" value="2814"/>
</dbReference>
<dbReference type="GO" id="GO:0019866">
    <property type="term" value="C:organelle inner membrane"/>
    <property type="evidence" value="ECO:0007669"/>
    <property type="project" value="InterPro"/>
</dbReference>
<dbReference type="GO" id="GO:0005886">
    <property type="term" value="C:plasma membrane"/>
    <property type="evidence" value="ECO:0007669"/>
    <property type="project" value="UniProtKB-SubCell"/>
</dbReference>
<dbReference type="GO" id="GO:0016301">
    <property type="term" value="F:kinase activity"/>
    <property type="evidence" value="ECO:0007669"/>
    <property type="project" value="UniProtKB-KW"/>
</dbReference>
<dbReference type="GO" id="GO:0046872">
    <property type="term" value="F:metal ion binding"/>
    <property type="evidence" value="ECO:0007669"/>
    <property type="project" value="UniProtKB-KW"/>
</dbReference>
<dbReference type="GO" id="GO:0015572">
    <property type="term" value="F:N-acetylglucosamine transmembrane transporter activity"/>
    <property type="evidence" value="ECO:0007669"/>
    <property type="project" value="InterPro"/>
</dbReference>
<dbReference type="GO" id="GO:0103111">
    <property type="term" value="F:protein-N(pi)-phosphohistidine--N-acetyl-D-glucosamine phosphotransferase activity"/>
    <property type="evidence" value="ECO:0007669"/>
    <property type="project" value="UniProtKB-EC"/>
</dbReference>
<dbReference type="GO" id="GO:0008982">
    <property type="term" value="F:protein-N(PI)-phosphohistidine-sugar phosphotransferase activity"/>
    <property type="evidence" value="ECO:0007669"/>
    <property type="project" value="InterPro"/>
</dbReference>
<dbReference type="GO" id="GO:0090563">
    <property type="term" value="F:protein-phosphocysteine-sugar phosphotransferase activity"/>
    <property type="evidence" value="ECO:0007669"/>
    <property type="project" value="TreeGrafter"/>
</dbReference>
<dbReference type="GO" id="GO:0015764">
    <property type="term" value="P:N-acetylglucosamine transport"/>
    <property type="evidence" value="ECO:0007669"/>
    <property type="project" value="TreeGrafter"/>
</dbReference>
<dbReference type="GO" id="GO:0009401">
    <property type="term" value="P:phosphoenolpyruvate-dependent sugar phosphotransferase system"/>
    <property type="evidence" value="ECO:0007669"/>
    <property type="project" value="UniProtKB-KW"/>
</dbReference>
<dbReference type="CDD" id="cd00210">
    <property type="entry name" value="PTS_IIA_glc"/>
    <property type="match status" value="1"/>
</dbReference>
<dbReference type="CDD" id="cd00212">
    <property type="entry name" value="PTS_IIB_glc"/>
    <property type="match status" value="1"/>
</dbReference>
<dbReference type="FunFam" id="2.70.70.10:FF:000001">
    <property type="entry name" value="PTS system glucose-specific IIA component"/>
    <property type="match status" value="1"/>
</dbReference>
<dbReference type="FunFam" id="3.30.1360.60:FF:000001">
    <property type="entry name" value="PTS system glucose-specific IIBC component PtsG"/>
    <property type="match status" value="1"/>
</dbReference>
<dbReference type="Gene3D" id="2.70.70.10">
    <property type="entry name" value="Glucose Permease (Domain IIA)"/>
    <property type="match status" value="1"/>
</dbReference>
<dbReference type="Gene3D" id="3.30.1360.60">
    <property type="entry name" value="Glucose permease domain IIB"/>
    <property type="match status" value="1"/>
</dbReference>
<dbReference type="InterPro" id="IPR011055">
    <property type="entry name" value="Dup_hybrid_motif"/>
</dbReference>
<dbReference type="InterPro" id="IPR036878">
    <property type="entry name" value="Glu_permease_IIB"/>
</dbReference>
<dbReference type="InterPro" id="IPR018113">
    <property type="entry name" value="PTrfase_EIIB_Cys"/>
</dbReference>
<dbReference type="InterPro" id="IPR001127">
    <property type="entry name" value="PTS_EIIA_1_perm"/>
</dbReference>
<dbReference type="InterPro" id="IPR003352">
    <property type="entry name" value="PTS_EIIC"/>
</dbReference>
<dbReference type="InterPro" id="IPR013013">
    <property type="entry name" value="PTS_EIIC_1"/>
</dbReference>
<dbReference type="InterPro" id="IPR050429">
    <property type="entry name" value="PTS_Glucose_EIICBA"/>
</dbReference>
<dbReference type="InterPro" id="IPR001996">
    <property type="entry name" value="PTS_IIB_1"/>
</dbReference>
<dbReference type="InterPro" id="IPR010974">
    <property type="entry name" value="PTS_IIBC_nag"/>
</dbReference>
<dbReference type="NCBIfam" id="TIGR00826">
    <property type="entry name" value="EIIB_glc"/>
    <property type="match status" value="1"/>
</dbReference>
<dbReference type="NCBIfam" id="NF007608">
    <property type="entry name" value="PRK10255.1"/>
    <property type="match status" value="1"/>
</dbReference>
<dbReference type="NCBIfam" id="TIGR00830">
    <property type="entry name" value="PTBA"/>
    <property type="match status" value="1"/>
</dbReference>
<dbReference type="NCBIfam" id="TIGR01998">
    <property type="entry name" value="PTS-II-BC-nag"/>
    <property type="match status" value="1"/>
</dbReference>
<dbReference type="PANTHER" id="PTHR30009">
    <property type="entry name" value="CYTOCHROME C-TYPE SYNTHESIS PROTEIN AND PTS TRANSMEMBRANE COMPONENT"/>
    <property type="match status" value="1"/>
</dbReference>
<dbReference type="PANTHER" id="PTHR30009:SF4">
    <property type="entry name" value="PTS SYSTEM N-ACETYLGLUCOSAMINE-SPECIFIC EIICBA COMPONENT"/>
    <property type="match status" value="1"/>
</dbReference>
<dbReference type="Pfam" id="PF00358">
    <property type="entry name" value="PTS_EIIA_1"/>
    <property type="match status" value="1"/>
</dbReference>
<dbReference type="Pfam" id="PF00367">
    <property type="entry name" value="PTS_EIIB"/>
    <property type="match status" value="1"/>
</dbReference>
<dbReference type="Pfam" id="PF02378">
    <property type="entry name" value="PTS_EIIC"/>
    <property type="match status" value="1"/>
</dbReference>
<dbReference type="SUPFAM" id="SSF51261">
    <property type="entry name" value="Duplicated hybrid motif"/>
    <property type="match status" value="1"/>
</dbReference>
<dbReference type="SUPFAM" id="SSF55604">
    <property type="entry name" value="Glucose permease domain IIB"/>
    <property type="match status" value="1"/>
</dbReference>
<dbReference type="PROSITE" id="PS51093">
    <property type="entry name" value="PTS_EIIA_TYPE_1"/>
    <property type="match status" value="1"/>
</dbReference>
<dbReference type="PROSITE" id="PS00371">
    <property type="entry name" value="PTS_EIIA_TYPE_1_HIS"/>
    <property type="match status" value="1"/>
</dbReference>
<dbReference type="PROSITE" id="PS51098">
    <property type="entry name" value="PTS_EIIB_TYPE_1"/>
    <property type="match status" value="1"/>
</dbReference>
<dbReference type="PROSITE" id="PS01035">
    <property type="entry name" value="PTS_EIIB_TYPE_1_CYS"/>
    <property type="match status" value="1"/>
</dbReference>
<dbReference type="PROSITE" id="PS51103">
    <property type="entry name" value="PTS_EIIC_TYPE_1"/>
    <property type="match status" value="1"/>
</dbReference>
<sequence length="651" mass="68180">MNILGFFQRLGRALQLPIAVLPVAALLLRFGQPDLLNVPFIAQAGGAIFDNLALIFAIGVASSWSKDNAGSAALAGAVGYFVMTKAMVTINPEINMGVLAGIITGLVAGAVYNRWAGIKLPDFLSFFGGKRFVPIATGFFCLILAAIFGYVWPPVQHAIHSGGEWIVSAGALGSGIFGFINRLLIPTGLHQVLNTIAWFQIGEFTNAAGTVFHGDINRFYAGDGTAGMFMSGFFPIMMFGLPGAALAMYLAAPKARRPMVGGMLLSVAITAFLTGVTEPLEFLFLFLAPLLYLLHAVLTGISLFIATALGIHAGFSFSAGAIDYVLMYSLPAASKNVWMLLVMGVVFFFVYFLLFSAVIRMFNLKTPGREDKAADVVTEEANSNTEEGLTQLATSYIAAVGGTDNLKAIDACITRLRLTVGDSAKVNDAACKRLGASGVVKLNKQTIQVIVGAKAESIGDEMKKVVTRGPVAAAAAAPAGNVATAAPAAKPQAVANAKTVESLVSPITGDVVALEQVPDEAFASKAVGDGIAVKPTDNIVVAPAAGTVVKIFNTNHAFCLETNNGAEIVVHMGIDTVALEGKGFKRLVEEGTDVKAGEPILEMDLDFLNANARSMISPVVCSNSDDYSALVILASGKVVAGQTPLYEIKGK</sequence>
<evidence type="ECO:0000250" key="1">
    <source>
        <dbReference type="UniProtKB" id="P09323"/>
    </source>
</evidence>
<evidence type="ECO:0000250" key="2">
    <source>
        <dbReference type="UniProtKB" id="P69783"/>
    </source>
</evidence>
<evidence type="ECO:0000250" key="3">
    <source>
        <dbReference type="UniProtKB" id="P69786"/>
    </source>
</evidence>
<evidence type="ECO:0000255" key="4">
    <source>
        <dbReference type="PROSITE-ProRule" id="PRU00416"/>
    </source>
</evidence>
<evidence type="ECO:0000255" key="5">
    <source>
        <dbReference type="PROSITE-ProRule" id="PRU00421"/>
    </source>
</evidence>
<evidence type="ECO:0000255" key="6">
    <source>
        <dbReference type="PROSITE-ProRule" id="PRU00426"/>
    </source>
</evidence>
<evidence type="ECO:0000305" key="7"/>
<proteinExistence type="inferred from homology"/>
<keyword id="KW-0997">Cell inner membrane</keyword>
<keyword id="KW-1003">Cell membrane</keyword>
<keyword id="KW-0418">Kinase</keyword>
<keyword id="KW-0472">Membrane</keyword>
<keyword id="KW-0479">Metal-binding</keyword>
<keyword id="KW-0597">Phosphoprotein</keyword>
<keyword id="KW-0598">Phosphotransferase system</keyword>
<keyword id="KW-0762">Sugar transport</keyword>
<keyword id="KW-0808">Transferase</keyword>
<keyword id="KW-0812">Transmembrane</keyword>
<keyword id="KW-1133">Transmembrane helix</keyword>
<keyword id="KW-0813">Transport</keyword>
<keyword id="KW-0862">Zinc</keyword>
<reference key="1">
    <citation type="journal article" date="1991" name="Mol. Gen. Genet.">
        <title>Comparison of the sequences of the nagE operons from Klebsiella pneumoniae and Escherichia coli K12: enhanced variability of the enzyme IIN-acetylglucosamine in regions connecting functional domains.</title>
        <authorList>
            <person name="Vogler A.P."/>
            <person name="Lengeler J.W."/>
        </authorList>
    </citation>
    <scope>NUCLEOTIDE SEQUENCE [GENOMIC DNA]</scope>
    <source>
        <strain>1033-5P14 / KAY2026</strain>
    </source>
</reference>